<gene>
    <name type="primary">PGdx</name>
    <name type="ordered locus">HI_0572</name>
</gene>
<evidence type="ECO:0000255" key="1">
    <source>
        <dbReference type="PROSITE-ProRule" id="PRU00686"/>
    </source>
</evidence>
<evidence type="ECO:0000255" key="2">
    <source>
        <dbReference type="PROSITE-ProRule" id="PRU00691"/>
    </source>
</evidence>
<evidence type="ECO:0000269" key="3">
    <source>
    </source>
</evidence>
<evidence type="ECO:0000269" key="4">
    <source>
    </source>
</evidence>
<evidence type="ECO:0000269" key="5">
    <source ref="3"/>
</evidence>
<evidence type="ECO:0000303" key="6">
    <source ref="3"/>
</evidence>
<evidence type="ECO:0000305" key="7"/>
<evidence type="ECO:0000305" key="8">
    <source>
    </source>
</evidence>
<evidence type="ECO:0000305" key="9">
    <source>
    </source>
</evidence>
<evidence type="ECO:0007829" key="10">
    <source>
        <dbReference type="PDB" id="1NM3"/>
    </source>
</evidence>
<name>PRX5_HAEIN</name>
<reference key="1">
    <citation type="journal article" date="1995" name="Science">
        <title>Whole-genome random sequencing and assembly of Haemophilus influenzae Rd.</title>
        <authorList>
            <person name="Fleischmann R.D."/>
            <person name="Adams M.D."/>
            <person name="White O."/>
            <person name="Clayton R.A."/>
            <person name="Kirkness E.F."/>
            <person name="Kerlavage A.R."/>
            <person name="Bult C.J."/>
            <person name="Tomb J.-F."/>
            <person name="Dougherty B.A."/>
            <person name="Merrick J.M."/>
            <person name="McKenney K."/>
            <person name="Sutton G.G."/>
            <person name="FitzHugh W."/>
            <person name="Fields C.A."/>
            <person name="Gocayne J.D."/>
            <person name="Scott J.D."/>
            <person name="Shirley R."/>
            <person name="Liu L.-I."/>
            <person name="Glodek A."/>
            <person name="Kelley J.M."/>
            <person name="Weidman J.F."/>
            <person name="Phillips C.A."/>
            <person name="Spriggs T."/>
            <person name="Hedblom E."/>
            <person name="Cotton M.D."/>
            <person name="Utterback T.R."/>
            <person name="Hanna M.C."/>
            <person name="Nguyen D.T."/>
            <person name="Saudek D.M."/>
            <person name="Brandon R.C."/>
            <person name="Fine L.D."/>
            <person name="Fritchman J.L."/>
            <person name="Fuhrmann J.L."/>
            <person name="Geoghagen N.S.M."/>
            <person name="Gnehm C.L."/>
            <person name="McDonald L.A."/>
            <person name="Small K.V."/>
            <person name="Fraser C.M."/>
            <person name="Smith H.O."/>
            <person name="Venter J.C."/>
        </authorList>
    </citation>
    <scope>NUCLEOTIDE SEQUENCE [LARGE SCALE GENOMIC DNA]</scope>
    <source>
        <strain>ATCC 51907 / DSM 11121 / KW20 / Rd</strain>
    </source>
</reference>
<reference key="2">
    <citation type="journal article" date="2000" name="Electrophoresis">
        <title>Two-dimensional map of the proteome of Haemophilus influenzae.</title>
        <authorList>
            <person name="Langen H."/>
            <person name="Takacs B."/>
            <person name="Evers S."/>
            <person name="Berndt P."/>
            <person name="Lahm H.W."/>
            <person name="Wipf B."/>
            <person name="Gray C."/>
            <person name="Fountoulakis M."/>
        </authorList>
    </citation>
    <scope>IDENTIFICATION BY MASS SPECTROMETRY</scope>
    <source>
        <strain>ATCC 51907 / DSM 11121 / KW20 / Rd</strain>
    </source>
</reference>
<reference key="3">
    <citation type="journal article" date="2000" name="J. Biochem. Mol. Biol.">
        <title>Characterization of Haemophilus influenzae peroxiredoxins.</title>
        <authorList>
            <person name="Hwang Y.-S."/>
            <person name="Chae H.-Z."/>
            <person name="Kim K.-H."/>
        </authorList>
    </citation>
    <scope>FUNCTION</scope>
    <scope>CATALYTIC ACTIVITY</scope>
    <source>
        <strain>ATCC 51907 / DSM 11121 / KW20 / Rd</strain>
    </source>
</reference>
<reference key="4">
    <citation type="journal article" date="2003" name="J. Biol. Chem.">
        <title>Purification and characterization of a chimeric enzyme from Haemophilus influenzae Rd that exhibits glutathione-dependent peroxidase activity.</title>
        <authorList>
            <person name="Pauwels F."/>
            <person name="Vergauwen B."/>
            <person name="Vanrobaeys F."/>
            <person name="Devreese B."/>
            <person name="Van Beeumen J.J."/>
        </authorList>
    </citation>
    <scope>FUNCTION</scope>
    <scope>CATALYTIC ACTIVITY</scope>
    <scope>BIOPHYSICOCHEMICAL PROPERTIES</scope>
    <scope>ACTIVE SITE</scope>
    <scope>MASS SPECTROMETRY</scope>
    <source>
        <strain>ATCC 51907 / DSM 11121 / KW20 / Rd</strain>
    </source>
</reference>
<reference key="5">
    <citation type="journal article" date="2003" name="J. Biol. Chem.">
        <title>The tetrameric structure of Haemophilus influenza hybrid Prx5 reveals interactions between electron donor and acceptor proteins.</title>
        <authorList>
            <person name="Kim S.J."/>
            <person name="Woo J.R."/>
            <person name="Hwang Y.S."/>
            <person name="Jeong D.G."/>
            <person name="Shin D.H."/>
            <person name="Kim K."/>
            <person name="Ryu S.E."/>
        </authorList>
    </citation>
    <scope>X-RAY CRYSTALLOGRAPHY (2.8 ANGSTROMS)</scope>
    <scope>SUBUNIT</scope>
</reference>
<keyword id="KW-0002">3D-structure</keyword>
<keyword id="KW-0049">Antioxidant</keyword>
<keyword id="KW-1015">Disulfide bond</keyword>
<keyword id="KW-0560">Oxidoreductase</keyword>
<keyword id="KW-0575">Peroxidase</keyword>
<keyword id="KW-0676">Redox-active center</keyword>
<keyword id="KW-1185">Reference proteome</keyword>
<protein>
    <recommendedName>
        <fullName>Hybrid peroxiredoxin hyPrx5</fullName>
        <ecNumber evidence="4 5">1.11.1.27</ecNumber>
    </recommendedName>
    <alternativeName>
        <fullName evidence="6">Glutathione-dependent peroxidase</fullName>
    </alternativeName>
    <alternativeName>
        <fullName evidence="7">Glutathione-dependent peroxiredoxin</fullName>
    </alternativeName>
    <alternativeName>
        <fullName>Peroxiredoxin-glutaredoxin fusion protein</fullName>
        <shortName>PGdx</shortName>
        <shortName>Prx-Grx</shortName>
    </alternativeName>
</protein>
<proteinExistence type="evidence at protein level"/>
<dbReference type="EC" id="1.11.1.27" evidence="4 5"/>
<dbReference type="EMBL" id="L42023">
    <property type="protein sequence ID" value="AAC22230.1"/>
    <property type="molecule type" value="Genomic_DNA"/>
</dbReference>
<dbReference type="PIR" id="I64154">
    <property type="entry name" value="I64154"/>
</dbReference>
<dbReference type="RefSeq" id="NP_438729.1">
    <property type="nucleotide sequence ID" value="NC_000907.1"/>
</dbReference>
<dbReference type="PDB" id="1NM3">
    <property type="method" value="X-ray"/>
    <property type="resolution" value="2.80 A"/>
    <property type="chains" value="A/B=1-241"/>
</dbReference>
<dbReference type="PDBsum" id="1NM3"/>
<dbReference type="SMR" id="P44758"/>
<dbReference type="STRING" id="71421.HI_0572"/>
<dbReference type="PeroxiBase" id="4786">
    <property type="entry name" value="HinPrxGrx_KW20"/>
</dbReference>
<dbReference type="EnsemblBacteria" id="AAC22230">
    <property type="protein sequence ID" value="AAC22230"/>
    <property type="gene ID" value="HI_0572"/>
</dbReference>
<dbReference type="KEGG" id="hin:HI_0572"/>
<dbReference type="PATRIC" id="fig|71421.8.peg.592"/>
<dbReference type="eggNOG" id="COG0678">
    <property type="taxonomic scope" value="Bacteria"/>
</dbReference>
<dbReference type="eggNOG" id="COG0695">
    <property type="taxonomic scope" value="Bacteria"/>
</dbReference>
<dbReference type="HOGENOM" id="CLU_072440_2_2_6"/>
<dbReference type="OrthoDB" id="9800621at2"/>
<dbReference type="PhylomeDB" id="P44758"/>
<dbReference type="BioCyc" id="HINF71421:G1GJ1-584-MONOMER"/>
<dbReference type="BRENDA" id="1.11.1.27">
    <property type="organism ID" value="2529"/>
</dbReference>
<dbReference type="EvolutionaryTrace" id="P44758"/>
<dbReference type="Proteomes" id="UP000000579">
    <property type="component" value="Chromosome"/>
</dbReference>
<dbReference type="GO" id="GO:0005737">
    <property type="term" value="C:cytoplasm"/>
    <property type="evidence" value="ECO:0000318"/>
    <property type="project" value="GO_Central"/>
</dbReference>
<dbReference type="GO" id="GO:0008379">
    <property type="term" value="F:thioredoxin peroxidase activity"/>
    <property type="evidence" value="ECO:0000318"/>
    <property type="project" value="GO_Central"/>
</dbReference>
<dbReference type="GO" id="GO:0045454">
    <property type="term" value="P:cell redox homeostasis"/>
    <property type="evidence" value="ECO:0000318"/>
    <property type="project" value="GO_Central"/>
</dbReference>
<dbReference type="GO" id="GO:0034599">
    <property type="term" value="P:cellular response to oxidative stress"/>
    <property type="evidence" value="ECO:0000318"/>
    <property type="project" value="GO_Central"/>
</dbReference>
<dbReference type="GO" id="GO:0042744">
    <property type="term" value="P:hydrogen peroxide catabolic process"/>
    <property type="evidence" value="ECO:0000318"/>
    <property type="project" value="GO_Central"/>
</dbReference>
<dbReference type="CDD" id="cd03029">
    <property type="entry name" value="GRX_hybridPRX5"/>
    <property type="match status" value="1"/>
</dbReference>
<dbReference type="CDD" id="cd03013">
    <property type="entry name" value="PRX5_like"/>
    <property type="match status" value="1"/>
</dbReference>
<dbReference type="FunFam" id="3.40.30.10:FF:000171">
    <property type="entry name" value="Glutathione amide-dependent peroxidase"/>
    <property type="match status" value="1"/>
</dbReference>
<dbReference type="FunFam" id="3.40.30.10:FF:000160">
    <property type="entry name" value="Peroxiredoxin family protein/glutaredoxin"/>
    <property type="match status" value="1"/>
</dbReference>
<dbReference type="Gene3D" id="3.40.30.10">
    <property type="entry name" value="Glutaredoxin"/>
    <property type="match status" value="2"/>
</dbReference>
<dbReference type="InterPro" id="IPR011767">
    <property type="entry name" value="GLR_AS"/>
</dbReference>
<dbReference type="InterPro" id="IPR002109">
    <property type="entry name" value="Glutaredoxin"/>
</dbReference>
<dbReference type="InterPro" id="IPR011906">
    <property type="entry name" value="Glutaredoxin_dom"/>
</dbReference>
<dbReference type="InterPro" id="IPR014025">
    <property type="entry name" value="Glutaredoxin_subgr"/>
</dbReference>
<dbReference type="InterPro" id="IPR037944">
    <property type="entry name" value="PRX5-like"/>
</dbReference>
<dbReference type="InterPro" id="IPR013740">
    <property type="entry name" value="Redoxin"/>
</dbReference>
<dbReference type="InterPro" id="IPR036249">
    <property type="entry name" value="Thioredoxin-like_sf"/>
</dbReference>
<dbReference type="InterPro" id="IPR013766">
    <property type="entry name" value="Thioredoxin_domain"/>
</dbReference>
<dbReference type="NCBIfam" id="TIGR02190">
    <property type="entry name" value="GlrX-dom"/>
    <property type="match status" value="1"/>
</dbReference>
<dbReference type="PANTHER" id="PTHR10430">
    <property type="entry name" value="PEROXIREDOXIN"/>
    <property type="match status" value="1"/>
</dbReference>
<dbReference type="PANTHER" id="PTHR10430:SF16">
    <property type="entry name" value="PEROXIREDOXIN-5, MITOCHONDRIAL"/>
    <property type="match status" value="1"/>
</dbReference>
<dbReference type="Pfam" id="PF00462">
    <property type="entry name" value="Glutaredoxin"/>
    <property type="match status" value="1"/>
</dbReference>
<dbReference type="Pfam" id="PF08534">
    <property type="entry name" value="Redoxin"/>
    <property type="match status" value="1"/>
</dbReference>
<dbReference type="PRINTS" id="PR00160">
    <property type="entry name" value="GLUTAREDOXIN"/>
</dbReference>
<dbReference type="SUPFAM" id="SSF52833">
    <property type="entry name" value="Thioredoxin-like"/>
    <property type="match status" value="1"/>
</dbReference>
<dbReference type="PROSITE" id="PS00195">
    <property type="entry name" value="GLUTAREDOXIN_1"/>
    <property type="match status" value="1"/>
</dbReference>
<dbReference type="PROSITE" id="PS51354">
    <property type="entry name" value="GLUTAREDOXIN_2"/>
    <property type="match status" value="1"/>
</dbReference>
<sequence>MSSMEGKKVPQVTFRTRQGDKWVDVTTSELFDNKTVIVFSLPGAFTPTCSSSHLPRYNELAPVFKKYGVDDILVVSVNDTFVMNAWKEDEKSENISFIPDGNGEFTEGMGMLVGKEDLGFGKRSWRYSMLVKNGVVEKMFIEPNEPGDPFKVSDADTMLKYLAPQHQVQESISIFTKPGCPFCAKAKQLLHDKGLSFEEIILGHDATIVSVRAVSGRTTVPQVFIGGKHIGGSDDLEKYFA</sequence>
<comment type="function">
    <text evidence="4 5">Thiol-specific peroxidase that catalyzes the reduction of hydrogen peroxide and organic hydroperoxides to water and alcohols, respectively. Plays a role in cell protection against oxidative stress by detoxifying peroxides.</text>
</comment>
<comment type="catalytic activity">
    <reaction evidence="4 5">
        <text>a hydroperoxide + 2 glutathione = an alcohol + glutathione disulfide + H2O</text>
        <dbReference type="Rhea" id="RHEA:62632"/>
        <dbReference type="ChEBI" id="CHEBI:15377"/>
        <dbReference type="ChEBI" id="CHEBI:30879"/>
        <dbReference type="ChEBI" id="CHEBI:35924"/>
        <dbReference type="ChEBI" id="CHEBI:57925"/>
        <dbReference type="ChEBI" id="CHEBI:58297"/>
        <dbReference type="EC" id="1.11.1.27"/>
    </reaction>
</comment>
<comment type="biophysicochemical properties">
    <kinetics>
        <KM evidence="4">2.29 uM for H(2)O(2)</KM>
        <KM evidence="4">208.8 uM for tert-butyl hydroperoxide</KM>
        <Vmax evidence="4">25.74 umol/min/mg enzyme for H(2)O(2)</Vmax>
        <Vmax evidence="4">26.57 umol/min/mg enzyme for tert-butyl hydroperoxide</Vmax>
    </kinetics>
    <phDependence>
        <text evidence="4">Optimum pH is 7.8.</text>
    </phDependence>
</comment>
<comment type="subunit">
    <text evidence="3">Homotetramer; interconnecting Prx and Grx domains of different monomers.</text>
</comment>
<comment type="miscellaneous">
    <text evidence="8 9">The active site is a conserved redox-active cysteine residue, the peroxidatic cysteine (C(P)), which makes the nucleophilic attack on the peroxide substrate. The peroxide oxidizes the C(P)-SH to cysteine sulfenic acid (C(P)-SOH), which then reacts with another cysteine residue, the resolving cysteine (C(R)), to form a disulfide bridge. The disulfide is subsequently reduced by an appropriate electron donor to complete the catalytic cycle. In the hybrid peroxiredoxin hyPrx5, no C(R) is present and C(P) instead is reduced directly by the redox-active site in the Grx-domain of another monomer, regenerating peroxidase activity of the enzyme. The oxidized glutaredoxin is reduced by reduced glutathione (GSH) (Probable). C(P) may also be reactivated by glutathionylation and subsequent reduction by the Grx-domain (Probable).</text>
</comment>
<comment type="similarity">
    <text evidence="7">In the N-terminal section; belongs to the peroxiredoxin family. Prx5 subfamily.</text>
</comment>
<comment type="similarity">
    <text evidence="7">In the C-terminal section; belongs to the glutaredoxin family.</text>
</comment>
<organism>
    <name type="scientific">Haemophilus influenzae (strain ATCC 51907 / DSM 11121 / KW20 / Rd)</name>
    <dbReference type="NCBI Taxonomy" id="71421"/>
    <lineage>
        <taxon>Bacteria</taxon>
        <taxon>Pseudomonadati</taxon>
        <taxon>Pseudomonadota</taxon>
        <taxon>Gammaproteobacteria</taxon>
        <taxon>Pasteurellales</taxon>
        <taxon>Pasteurellaceae</taxon>
        <taxon>Haemophilus</taxon>
    </lineage>
</organism>
<feature type="chain" id="PRO_0000056612" description="Hybrid peroxiredoxin hyPrx5">
    <location>
        <begin position="1"/>
        <end position="241"/>
    </location>
</feature>
<feature type="domain" description="Thioredoxin" evidence="2">
    <location>
        <begin position="3"/>
        <end position="167"/>
    </location>
</feature>
<feature type="domain" description="Glutaredoxin" evidence="1">
    <location>
        <begin position="170"/>
        <end position="241"/>
    </location>
</feature>
<feature type="active site" description="Cysteine sulfenic acid (-SOH) intermediate; for peroxiredoxin activity" evidence="9">
    <location>
        <position position="49"/>
    </location>
</feature>
<feature type="disulfide bond" description="Redox-active; for glutaredoxin activity" evidence="3">
    <location>
        <begin position="180"/>
        <end position="183"/>
    </location>
</feature>
<feature type="strand" evidence="10">
    <location>
        <begin position="13"/>
        <end position="18"/>
    </location>
</feature>
<feature type="strand" evidence="10">
    <location>
        <begin position="21"/>
        <end position="26"/>
    </location>
</feature>
<feature type="helix" evidence="10">
    <location>
        <begin position="27"/>
        <end position="31"/>
    </location>
</feature>
<feature type="strand" evidence="10">
    <location>
        <begin position="34"/>
        <end position="42"/>
    </location>
</feature>
<feature type="helix" evidence="10">
    <location>
        <begin position="47"/>
        <end position="51"/>
    </location>
</feature>
<feature type="helix" evidence="10">
    <location>
        <begin position="53"/>
        <end position="66"/>
    </location>
</feature>
<feature type="strand" evidence="10">
    <location>
        <begin position="71"/>
        <end position="78"/>
    </location>
</feature>
<feature type="helix" evidence="10">
    <location>
        <begin position="80"/>
        <end position="89"/>
    </location>
</feature>
<feature type="strand" evidence="10">
    <location>
        <begin position="95"/>
        <end position="99"/>
    </location>
</feature>
<feature type="helix" evidence="10">
    <location>
        <begin position="104"/>
        <end position="108"/>
    </location>
</feature>
<feature type="strand" evidence="10">
    <location>
        <begin position="112"/>
        <end position="114"/>
    </location>
</feature>
<feature type="turn" evidence="10">
    <location>
        <begin position="116"/>
        <end position="119"/>
    </location>
</feature>
<feature type="strand" evidence="10">
    <location>
        <begin position="122"/>
        <end position="124"/>
    </location>
</feature>
<feature type="strand" evidence="10">
    <location>
        <begin position="127"/>
        <end position="132"/>
    </location>
</feature>
<feature type="strand" evidence="10">
    <location>
        <begin position="135"/>
        <end position="141"/>
    </location>
</feature>
<feature type="strand" evidence="10">
    <location>
        <begin position="151"/>
        <end position="154"/>
    </location>
</feature>
<feature type="helix" evidence="10">
    <location>
        <begin position="155"/>
        <end position="162"/>
    </location>
</feature>
<feature type="strand" evidence="10">
    <location>
        <begin position="172"/>
        <end position="176"/>
    </location>
</feature>
<feature type="helix" evidence="10">
    <location>
        <begin position="181"/>
        <end position="193"/>
    </location>
</feature>
<feature type="strand" evidence="10">
    <location>
        <begin position="198"/>
        <end position="201"/>
    </location>
</feature>
<feature type="turn" evidence="10">
    <location>
        <begin position="202"/>
        <end position="205"/>
    </location>
</feature>
<feature type="helix" evidence="10">
    <location>
        <begin position="208"/>
        <end position="214"/>
    </location>
</feature>
<feature type="strand" evidence="10">
    <location>
        <begin position="218"/>
        <end position="220"/>
    </location>
</feature>
<feature type="strand" evidence="10">
    <location>
        <begin position="222"/>
        <end position="225"/>
    </location>
</feature>
<feature type="strand" evidence="10">
    <location>
        <begin position="228"/>
        <end position="232"/>
    </location>
</feature>
<feature type="helix" evidence="10">
    <location>
        <begin position="233"/>
        <end position="238"/>
    </location>
</feature>
<accession>P44758</accession>